<protein>
    <recommendedName>
        <fullName evidence="1">NADH-quinone oxidoreductase subunit N</fullName>
        <ecNumber evidence="1">7.1.1.-</ecNumber>
    </recommendedName>
    <alternativeName>
        <fullName evidence="1">NADH dehydrogenase I subunit N</fullName>
    </alternativeName>
    <alternativeName>
        <fullName evidence="1">NDH-1 subunit N</fullName>
    </alternativeName>
</protein>
<feature type="chain" id="PRO_0000117690" description="NADH-quinone oxidoreductase subunit N">
    <location>
        <begin position="1"/>
        <end position="486"/>
    </location>
</feature>
<feature type="transmembrane region" description="Helical" evidence="1">
    <location>
        <begin position="8"/>
        <end position="28"/>
    </location>
</feature>
<feature type="transmembrane region" description="Helical" evidence="1">
    <location>
        <begin position="36"/>
        <end position="56"/>
    </location>
</feature>
<feature type="transmembrane region" description="Helical" evidence="1">
    <location>
        <begin position="74"/>
        <end position="94"/>
    </location>
</feature>
<feature type="transmembrane region" description="Helical" evidence="1">
    <location>
        <begin position="104"/>
        <end position="124"/>
    </location>
</feature>
<feature type="transmembrane region" description="Helical" evidence="1">
    <location>
        <begin position="125"/>
        <end position="145"/>
    </location>
</feature>
<feature type="transmembrane region" description="Helical" evidence="1">
    <location>
        <begin position="160"/>
        <end position="180"/>
    </location>
</feature>
<feature type="transmembrane region" description="Helical" evidence="1">
    <location>
        <begin position="201"/>
        <end position="221"/>
    </location>
</feature>
<feature type="transmembrane region" description="Helical" evidence="1">
    <location>
        <begin position="239"/>
        <end position="259"/>
    </location>
</feature>
<feature type="transmembrane region" description="Helical" evidence="1">
    <location>
        <begin position="269"/>
        <end position="289"/>
    </location>
</feature>
<feature type="transmembrane region" description="Helical" evidence="1">
    <location>
        <begin position="298"/>
        <end position="318"/>
    </location>
</feature>
<feature type="transmembrane region" description="Helical" evidence="1">
    <location>
        <begin position="329"/>
        <end position="349"/>
    </location>
</feature>
<feature type="transmembrane region" description="Helical" evidence="1">
    <location>
        <begin position="376"/>
        <end position="396"/>
    </location>
</feature>
<feature type="transmembrane region" description="Helical" evidence="1">
    <location>
        <begin position="410"/>
        <end position="432"/>
    </location>
</feature>
<feature type="transmembrane region" description="Helical" evidence="1">
    <location>
        <begin position="459"/>
        <end position="479"/>
    </location>
</feature>
<gene>
    <name evidence="1" type="primary">nuoN</name>
    <name type="ordered locus">BU166</name>
</gene>
<name>NUON_BUCAI</name>
<dbReference type="EC" id="7.1.1.-" evidence="1"/>
<dbReference type="EMBL" id="BA000003">
    <property type="protein sequence ID" value="BAB12884.1"/>
    <property type="status" value="ALT_INIT"/>
    <property type="molecule type" value="Genomic_DNA"/>
</dbReference>
<dbReference type="RefSeq" id="NP_239998.1">
    <property type="nucleotide sequence ID" value="NC_002528.1"/>
</dbReference>
<dbReference type="RefSeq" id="WP_164927326.1">
    <property type="nucleotide sequence ID" value="NC_002528.1"/>
</dbReference>
<dbReference type="SMR" id="P57264"/>
<dbReference type="STRING" id="563178.BUAP5A_164"/>
<dbReference type="EnsemblBacteria" id="BAB12884">
    <property type="protein sequence ID" value="BAB12884"/>
    <property type="gene ID" value="BAB12884"/>
</dbReference>
<dbReference type="KEGG" id="buc:BU166"/>
<dbReference type="PATRIC" id="fig|107806.10.peg.176"/>
<dbReference type="eggNOG" id="COG1007">
    <property type="taxonomic scope" value="Bacteria"/>
</dbReference>
<dbReference type="HOGENOM" id="CLU_007100_1_5_6"/>
<dbReference type="Proteomes" id="UP000001806">
    <property type="component" value="Chromosome"/>
</dbReference>
<dbReference type="GO" id="GO:0005886">
    <property type="term" value="C:plasma membrane"/>
    <property type="evidence" value="ECO:0007669"/>
    <property type="project" value="UniProtKB-SubCell"/>
</dbReference>
<dbReference type="GO" id="GO:0008137">
    <property type="term" value="F:NADH dehydrogenase (ubiquinone) activity"/>
    <property type="evidence" value="ECO:0007669"/>
    <property type="project" value="InterPro"/>
</dbReference>
<dbReference type="GO" id="GO:0050136">
    <property type="term" value="F:NADH:ubiquinone reductase (non-electrogenic) activity"/>
    <property type="evidence" value="ECO:0007669"/>
    <property type="project" value="UniProtKB-UniRule"/>
</dbReference>
<dbReference type="GO" id="GO:0048038">
    <property type="term" value="F:quinone binding"/>
    <property type="evidence" value="ECO:0007669"/>
    <property type="project" value="UniProtKB-KW"/>
</dbReference>
<dbReference type="GO" id="GO:0042773">
    <property type="term" value="P:ATP synthesis coupled electron transport"/>
    <property type="evidence" value="ECO:0007669"/>
    <property type="project" value="InterPro"/>
</dbReference>
<dbReference type="HAMAP" id="MF_00445">
    <property type="entry name" value="NDH1_NuoN_1"/>
    <property type="match status" value="1"/>
</dbReference>
<dbReference type="InterPro" id="IPR010096">
    <property type="entry name" value="NADH-Q_OxRdtase_suN/2"/>
</dbReference>
<dbReference type="InterPro" id="IPR001750">
    <property type="entry name" value="ND/Mrp_TM"/>
</dbReference>
<dbReference type="NCBIfam" id="TIGR01770">
    <property type="entry name" value="NDH_I_N"/>
    <property type="match status" value="1"/>
</dbReference>
<dbReference type="PANTHER" id="PTHR22773">
    <property type="entry name" value="NADH DEHYDROGENASE"/>
    <property type="match status" value="1"/>
</dbReference>
<dbReference type="Pfam" id="PF00361">
    <property type="entry name" value="Proton_antipo_M"/>
    <property type="match status" value="1"/>
</dbReference>
<organism>
    <name type="scientific">Buchnera aphidicola subsp. Acyrthosiphon pisum (strain APS)</name>
    <name type="common">Acyrthosiphon pisum symbiotic bacterium</name>
    <dbReference type="NCBI Taxonomy" id="107806"/>
    <lineage>
        <taxon>Bacteria</taxon>
        <taxon>Pseudomonadati</taxon>
        <taxon>Pseudomonadota</taxon>
        <taxon>Gammaproteobacteria</taxon>
        <taxon>Enterobacterales</taxon>
        <taxon>Erwiniaceae</taxon>
        <taxon>Buchnera</taxon>
    </lineage>
</organism>
<reference key="1">
    <citation type="journal article" date="2000" name="Nature">
        <title>Genome sequence of the endocellular bacterial symbiont of aphids Buchnera sp. APS.</title>
        <authorList>
            <person name="Shigenobu S."/>
            <person name="Watanabe H."/>
            <person name="Hattori M."/>
            <person name="Sakaki Y."/>
            <person name="Ishikawa H."/>
        </authorList>
    </citation>
    <scope>NUCLEOTIDE SEQUENCE [LARGE SCALE GENOMIC DNA]</scope>
    <source>
        <strain>APS</strain>
    </source>
</reference>
<keyword id="KW-1003">Cell membrane</keyword>
<keyword id="KW-0472">Membrane</keyword>
<keyword id="KW-0520">NAD</keyword>
<keyword id="KW-0874">Quinone</keyword>
<keyword id="KW-1185">Reference proteome</keyword>
<keyword id="KW-1278">Translocase</keyword>
<keyword id="KW-0812">Transmembrane</keyword>
<keyword id="KW-1133">Transmembrane helix</keyword>
<keyword id="KW-0813">Transport</keyword>
<keyword id="KW-0830">Ubiquinone</keyword>
<proteinExistence type="inferred from homology"/>
<accession>P57264</accession>
<sequence>MIINLQQLTALLPLLIIMLTVITVILSISYNRNHFFVAVFSILGLIFALCSLYFLIEIIPINVSILFHFNSNAILYIGMILISSICTCIFSYPWLLKYPFNKEEFYLLVIISTLGAISLTISHHMASFFINIELISLPMFGLIAYSRYQKYSLESSLKYIILSGVSSSFLLFGIAWVYSISGGLDFLSIHKSFNFASEKEILVVLFGISMILLSLFFKLSIVPFHLWTPDIYQGSPTSVLSFFSTAGKISVFSVLLNFLSYFSNSDNKVIYFILSLIIILSILVGNLMALFQKDIKRFLGYTSISQIGYLLIVLLVSHKNYSFSLEASAIYLCGYLFSNIACLGIVNLISTSHINNNASSINSYRGLFWSHPLLSSVLTLVLISSAGIPMTLGFIGKFYILSIVMIEHLWLIGFAFLIGSLLGLYCYLRIILNLYLHPSKLFKRDLNIPLNWVYTPSGIVICISGIILLALGIYPNPLIGLIKCTI</sequence>
<comment type="function">
    <text evidence="1">NDH-1 shuttles electrons from NADH, via FMN and iron-sulfur (Fe-S) centers, to quinones in the respiratory chain. The immediate electron acceptor for the enzyme in this species is believed to be ubiquinone. Couples the redox reaction to proton translocation (for every two electrons transferred, four hydrogen ions are translocated across the cytoplasmic membrane), and thus conserves the redox energy in a proton gradient.</text>
</comment>
<comment type="catalytic activity">
    <reaction evidence="1">
        <text>a quinone + NADH + 5 H(+)(in) = a quinol + NAD(+) + 4 H(+)(out)</text>
        <dbReference type="Rhea" id="RHEA:57888"/>
        <dbReference type="ChEBI" id="CHEBI:15378"/>
        <dbReference type="ChEBI" id="CHEBI:24646"/>
        <dbReference type="ChEBI" id="CHEBI:57540"/>
        <dbReference type="ChEBI" id="CHEBI:57945"/>
        <dbReference type="ChEBI" id="CHEBI:132124"/>
    </reaction>
</comment>
<comment type="subunit">
    <text evidence="1">NDH-1 is composed of 13 different subunits. Subunits NuoA, H, J, K, L, M, N constitute the membrane sector of the complex.</text>
</comment>
<comment type="subcellular location">
    <subcellularLocation>
        <location>Cell membrane</location>
        <topology>Multi-pass membrane protein</topology>
    </subcellularLocation>
</comment>
<comment type="similarity">
    <text evidence="1">Belongs to the complex I subunit 2 family.</text>
</comment>
<comment type="sequence caution" evidence="2">
    <conflict type="erroneous initiation">
        <sequence resource="EMBL-CDS" id="BAB12884"/>
    </conflict>
</comment>
<evidence type="ECO:0000255" key="1">
    <source>
        <dbReference type="HAMAP-Rule" id="MF_00445"/>
    </source>
</evidence>
<evidence type="ECO:0000305" key="2"/>